<name>RL13_SOLUE</name>
<reference key="1">
    <citation type="journal article" date="2009" name="Appl. Environ. Microbiol.">
        <title>Three genomes from the phylum Acidobacteria provide insight into the lifestyles of these microorganisms in soils.</title>
        <authorList>
            <person name="Ward N.L."/>
            <person name="Challacombe J.F."/>
            <person name="Janssen P.H."/>
            <person name="Henrissat B."/>
            <person name="Coutinho P.M."/>
            <person name="Wu M."/>
            <person name="Xie G."/>
            <person name="Haft D.H."/>
            <person name="Sait M."/>
            <person name="Badger J."/>
            <person name="Barabote R.D."/>
            <person name="Bradley B."/>
            <person name="Brettin T.S."/>
            <person name="Brinkac L.M."/>
            <person name="Bruce D."/>
            <person name="Creasy T."/>
            <person name="Daugherty S.C."/>
            <person name="Davidsen T.M."/>
            <person name="DeBoy R.T."/>
            <person name="Detter J.C."/>
            <person name="Dodson R.J."/>
            <person name="Durkin A.S."/>
            <person name="Ganapathy A."/>
            <person name="Gwinn-Giglio M."/>
            <person name="Han C.S."/>
            <person name="Khouri H."/>
            <person name="Kiss H."/>
            <person name="Kothari S.P."/>
            <person name="Madupu R."/>
            <person name="Nelson K.E."/>
            <person name="Nelson W.C."/>
            <person name="Paulsen I."/>
            <person name="Penn K."/>
            <person name="Ren Q."/>
            <person name="Rosovitz M.J."/>
            <person name="Selengut J.D."/>
            <person name="Shrivastava S."/>
            <person name="Sullivan S.A."/>
            <person name="Tapia R."/>
            <person name="Thompson L.S."/>
            <person name="Watkins K.L."/>
            <person name="Yang Q."/>
            <person name="Yu C."/>
            <person name="Zafar N."/>
            <person name="Zhou L."/>
            <person name="Kuske C.R."/>
        </authorList>
    </citation>
    <scope>NUCLEOTIDE SEQUENCE [LARGE SCALE GENOMIC DNA]</scope>
    <source>
        <strain>Ellin6076</strain>
    </source>
</reference>
<evidence type="ECO:0000255" key="1">
    <source>
        <dbReference type="HAMAP-Rule" id="MF_01366"/>
    </source>
</evidence>
<evidence type="ECO:0000305" key="2"/>
<gene>
    <name evidence="1" type="primary">rplM</name>
    <name type="ordered locus">Acid_0908</name>
</gene>
<feature type="chain" id="PRO_1000055474" description="Large ribosomal subunit protein uL13">
    <location>
        <begin position="1"/>
        <end position="143"/>
    </location>
</feature>
<accession>Q02AK9</accession>
<proteinExistence type="inferred from homology"/>
<sequence length="143" mass="15973">MSTEFPTKNGINREWHVIDAENVVLGKLASRAAMILMGKHKPTYTPFIDAGDHVVVINAEKVKVTGRKEEDKLYRHFTGYPGGLVEKSLKRVRAEKPTRIVEDAIAGMLPKNKLGKQMYRKLNVYAGSKHPHAAQQPVALTVK</sequence>
<organism>
    <name type="scientific">Solibacter usitatus (strain Ellin6076)</name>
    <dbReference type="NCBI Taxonomy" id="234267"/>
    <lineage>
        <taxon>Bacteria</taxon>
        <taxon>Pseudomonadati</taxon>
        <taxon>Acidobacteriota</taxon>
        <taxon>Terriglobia</taxon>
        <taxon>Bryobacterales</taxon>
        <taxon>Solibacteraceae</taxon>
        <taxon>Candidatus Solibacter</taxon>
    </lineage>
</organism>
<comment type="function">
    <text evidence="1">This protein is one of the early assembly proteins of the 50S ribosomal subunit, although it is not seen to bind rRNA by itself. It is important during the early stages of 50S assembly.</text>
</comment>
<comment type="subunit">
    <text evidence="1">Part of the 50S ribosomal subunit.</text>
</comment>
<comment type="similarity">
    <text evidence="1">Belongs to the universal ribosomal protein uL13 family.</text>
</comment>
<protein>
    <recommendedName>
        <fullName evidence="1">Large ribosomal subunit protein uL13</fullName>
    </recommendedName>
    <alternativeName>
        <fullName evidence="2">50S ribosomal protein L13</fullName>
    </alternativeName>
</protein>
<dbReference type="EMBL" id="CP000473">
    <property type="protein sequence ID" value="ABJ81907.1"/>
    <property type="molecule type" value="Genomic_DNA"/>
</dbReference>
<dbReference type="SMR" id="Q02AK9"/>
<dbReference type="FunCoup" id="Q02AK9">
    <property type="interactions" value="747"/>
</dbReference>
<dbReference type="STRING" id="234267.Acid_0908"/>
<dbReference type="KEGG" id="sus:Acid_0908"/>
<dbReference type="eggNOG" id="COG0102">
    <property type="taxonomic scope" value="Bacteria"/>
</dbReference>
<dbReference type="HOGENOM" id="CLU_082184_2_2_0"/>
<dbReference type="InParanoid" id="Q02AK9"/>
<dbReference type="OrthoDB" id="9801330at2"/>
<dbReference type="GO" id="GO:0022625">
    <property type="term" value="C:cytosolic large ribosomal subunit"/>
    <property type="evidence" value="ECO:0007669"/>
    <property type="project" value="TreeGrafter"/>
</dbReference>
<dbReference type="GO" id="GO:0003729">
    <property type="term" value="F:mRNA binding"/>
    <property type="evidence" value="ECO:0007669"/>
    <property type="project" value="TreeGrafter"/>
</dbReference>
<dbReference type="GO" id="GO:0003735">
    <property type="term" value="F:structural constituent of ribosome"/>
    <property type="evidence" value="ECO:0007669"/>
    <property type="project" value="InterPro"/>
</dbReference>
<dbReference type="GO" id="GO:0017148">
    <property type="term" value="P:negative regulation of translation"/>
    <property type="evidence" value="ECO:0007669"/>
    <property type="project" value="TreeGrafter"/>
</dbReference>
<dbReference type="GO" id="GO:0006412">
    <property type="term" value="P:translation"/>
    <property type="evidence" value="ECO:0007669"/>
    <property type="project" value="UniProtKB-UniRule"/>
</dbReference>
<dbReference type="CDD" id="cd00392">
    <property type="entry name" value="Ribosomal_L13"/>
    <property type="match status" value="1"/>
</dbReference>
<dbReference type="FunFam" id="3.90.1180.10:FF:000001">
    <property type="entry name" value="50S ribosomal protein L13"/>
    <property type="match status" value="1"/>
</dbReference>
<dbReference type="Gene3D" id="3.90.1180.10">
    <property type="entry name" value="Ribosomal protein L13"/>
    <property type="match status" value="1"/>
</dbReference>
<dbReference type="HAMAP" id="MF_01366">
    <property type="entry name" value="Ribosomal_uL13"/>
    <property type="match status" value="1"/>
</dbReference>
<dbReference type="InterPro" id="IPR005822">
    <property type="entry name" value="Ribosomal_uL13"/>
</dbReference>
<dbReference type="InterPro" id="IPR005823">
    <property type="entry name" value="Ribosomal_uL13_bac-type"/>
</dbReference>
<dbReference type="InterPro" id="IPR036899">
    <property type="entry name" value="Ribosomal_uL13_sf"/>
</dbReference>
<dbReference type="NCBIfam" id="TIGR01066">
    <property type="entry name" value="rplM_bact"/>
    <property type="match status" value="1"/>
</dbReference>
<dbReference type="PANTHER" id="PTHR11545:SF2">
    <property type="entry name" value="LARGE RIBOSOMAL SUBUNIT PROTEIN UL13M"/>
    <property type="match status" value="1"/>
</dbReference>
<dbReference type="PANTHER" id="PTHR11545">
    <property type="entry name" value="RIBOSOMAL PROTEIN L13"/>
    <property type="match status" value="1"/>
</dbReference>
<dbReference type="Pfam" id="PF00572">
    <property type="entry name" value="Ribosomal_L13"/>
    <property type="match status" value="1"/>
</dbReference>
<dbReference type="PIRSF" id="PIRSF002181">
    <property type="entry name" value="Ribosomal_L13"/>
    <property type="match status" value="1"/>
</dbReference>
<dbReference type="SUPFAM" id="SSF52161">
    <property type="entry name" value="Ribosomal protein L13"/>
    <property type="match status" value="1"/>
</dbReference>
<keyword id="KW-0687">Ribonucleoprotein</keyword>
<keyword id="KW-0689">Ribosomal protein</keyword>